<accession>Q86YW0</accession>
<accession>Q08AQ7</accession>
<accession>Q96J70</accession>
<feature type="chain" id="PRO_0000347244" description="1-phosphatidylinositol 4,5-bisphosphate phosphodiesterase zeta-1">
    <location>
        <begin position="1"/>
        <end position="608"/>
    </location>
</feature>
<feature type="domain" description="EF-hand" evidence="6">
    <location>
        <begin position="35"/>
        <end position="70"/>
    </location>
</feature>
<feature type="domain" description="PI-PLC X-box" evidence="4">
    <location>
        <begin position="155"/>
        <end position="299"/>
    </location>
</feature>
<feature type="domain" description="PI-PLC Y-box" evidence="5">
    <location>
        <begin position="349"/>
        <end position="465"/>
    </location>
</feature>
<feature type="domain" description="C2" evidence="3">
    <location>
        <begin position="465"/>
        <end position="589"/>
    </location>
</feature>
<feature type="region of interest" description="Disordered" evidence="7">
    <location>
        <begin position="305"/>
        <end position="324"/>
    </location>
</feature>
<feature type="active site" evidence="1 4">
    <location>
        <position position="170"/>
    </location>
</feature>
<feature type="active site" evidence="1 4">
    <location>
        <position position="215"/>
    </location>
</feature>
<feature type="splice variant" id="VSP_035076" description="In isoform 3." evidence="17">
    <location>
        <begin position="1"/>
        <end position="104"/>
    </location>
</feature>
<feature type="splice variant" id="VSP_052862" description="In isoform 2." evidence="18">
    <location>
        <begin position="46"/>
        <end position="238"/>
    </location>
</feature>
<feature type="sequence variant" id="VAR_088984" description="In SPGF17; likely pathogenic." evidence="15">
    <location>
        <begin position="196"/>
        <end position="608"/>
    </location>
</feature>
<feature type="sequence variant" id="VAR_088985" description="In SPGF17; uncertain significance; dbSNP:rs1310560334." evidence="14">
    <original>N</original>
    <variation>S</variation>
    <location>
        <position position="425"/>
    </location>
</feature>
<feature type="sequence variant" id="VAR_088986" description="In SPGF17; uncertain significance; dbSNP:rs749562548." evidence="14">
    <original>G</original>
    <variation>D</variation>
    <location>
        <position position="453"/>
    </location>
</feature>
<feature type="sequence variant" id="VAR_077876" description="In SPGF17; loss of function in egg activation; dbSNP:rs757326350." evidence="13">
    <original>I</original>
    <variation>F</variation>
    <location>
        <position position="489"/>
    </location>
</feature>
<feature type="sequence variant" id="VAR_050542" description="In dbSNP:rs10505830.">
    <original>S</original>
    <variation>L</variation>
    <location>
        <position position="500"/>
    </location>
</feature>
<feature type="sequence conflict" description="In Ref. 2; AAK61372." evidence="19" ref="2">
    <original>I</original>
    <variation>V</variation>
    <location>
        <position position="294"/>
    </location>
</feature>
<feature type="sequence conflict" description="In Ref. 2; AAK61372." evidence="19" ref="2">
    <original>I</original>
    <variation>T</variation>
    <location>
        <position position="489"/>
    </location>
</feature>
<keyword id="KW-0025">Alternative splicing</keyword>
<keyword id="KW-0106">Calcium</keyword>
<keyword id="KW-0963">Cytoplasm</keyword>
<keyword id="KW-0217">Developmental protein</keyword>
<keyword id="KW-0225">Disease variant</keyword>
<keyword id="KW-0278">Fertilization</keyword>
<keyword id="KW-0378">Hydrolase</keyword>
<keyword id="KW-0442">Lipid degradation</keyword>
<keyword id="KW-0443">Lipid metabolism</keyword>
<keyword id="KW-0539">Nucleus</keyword>
<keyword id="KW-1267">Proteomics identification</keyword>
<keyword id="KW-1185">Reference proteome</keyword>
<keyword id="KW-0807">Transducer</keyword>
<dbReference type="EC" id="3.1.4.11"/>
<dbReference type="EMBL" id="AF532185">
    <property type="protein sequence ID" value="AAN71895.1"/>
    <property type="molecule type" value="mRNA"/>
</dbReference>
<dbReference type="EMBL" id="AY035866">
    <property type="protein sequence ID" value="AAK61372.1"/>
    <property type="molecule type" value="mRNA"/>
</dbReference>
<dbReference type="EMBL" id="AK292279">
    <property type="protein sequence ID" value="BAF84968.1"/>
    <property type="molecule type" value="mRNA"/>
</dbReference>
<dbReference type="EMBL" id="BC125067">
    <property type="protein sequence ID" value="AAI25068.1"/>
    <property type="molecule type" value="mRNA"/>
</dbReference>
<dbReference type="CCDS" id="CCDS81671.1">
    <molecule id="Q86YW0-2"/>
</dbReference>
<dbReference type="CCDS" id="CCDS8680.1">
    <molecule id="Q86YW0-1"/>
</dbReference>
<dbReference type="RefSeq" id="NP_001317698.1">
    <molecule id="Q86YW0-2"/>
    <property type="nucleotide sequence ID" value="NM_001330769.1"/>
</dbReference>
<dbReference type="RefSeq" id="NP_001317703.1">
    <molecule id="Q86YW0-3"/>
    <property type="nucleotide sequence ID" value="NM_001330774.2"/>
</dbReference>
<dbReference type="RefSeq" id="NP_149114.2">
    <molecule id="Q86YW0-1"/>
    <property type="nucleotide sequence ID" value="NM_033123.3"/>
</dbReference>
<dbReference type="RefSeq" id="XP_024305023.1">
    <molecule id="Q86YW0-2"/>
    <property type="nucleotide sequence ID" value="XM_024449255.2"/>
</dbReference>
<dbReference type="RefSeq" id="XP_054229736.1">
    <molecule id="Q86YW0-2"/>
    <property type="nucleotide sequence ID" value="XM_054373761.1"/>
</dbReference>
<dbReference type="SMR" id="Q86YW0"/>
<dbReference type="BioGRID" id="124625">
    <property type="interactions" value="19"/>
</dbReference>
<dbReference type="FunCoup" id="Q86YW0">
    <property type="interactions" value="532"/>
</dbReference>
<dbReference type="IntAct" id="Q86YW0">
    <property type="interactions" value="11"/>
</dbReference>
<dbReference type="STRING" id="9606.ENSP00000266505"/>
<dbReference type="iPTMnet" id="Q86YW0"/>
<dbReference type="PhosphoSitePlus" id="Q86YW0"/>
<dbReference type="BioMuta" id="PLCZ1"/>
<dbReference type="DMDM" id="74714209"/>
<dbReference type="jPOST" id="Q86YW0"/>
<dbReference type="MassIVE" id="Q86YW0"/>
<dbReference type="PaxDb" id="9606-ENSP00000266505"/>
<dbReference type="PeptideAtlas" id="Q86YW0"/>
<dbReference type="ProteomicsDB" id="70479">
    <molecule id="Q86YW0-1"/>
</dbReference>
<dbReference type="ProteomicsDB" id="70480">
    <molecule id="Q86YW0-2"/>
</dbReference>
<dbReference type="ProteomicsDB" id="70481">
    <molecule id="Q86YW0-3"/>
</dbReference>
<dbReference type="Antibodypedia" id="52401">
    <property type="antibodies" value="117 antibodies from 18 providers"/>
</dbReference>
<dbReference type="DNASU" id="89869"/>
<dbReference type="Ensembl" id="ENST00000266505.12">
    <molecule id="Q86YW0-1"/>
    <property type="protein sequence ID" value="ENSP00000266505.7"/>
    <property type="gene ID" value="ENSG00000139151.16"/>
</dbReference>
<dbReference type="Ensembl" id="ENST00000539875.5">
    <molecule id="Q86YW0-2"/>
    <property type="protein sequence ID" value="ENSP00000445026.1"/>
    <property type="gene ID" value="ENSG00000139151.16"/>
</dbReference>
<dbReference type="GeneID" id="89869"/>
<dbReference type="KEGG" id="hsa:89869"/>
<dbReference type="MANE-Select" id="ENST00000266505.12">
    <property type="protein sequence ID" value="ENSP00000266505.7"/>
    <property type="RefSeq nucleotide sequence ID" value="NM_033123.4"/>
    <property type="RefSeq protein sequence ID" value="NP_149114.2"/>
</dbReference>
<dbReference type="UCSC" id="uc058lrt.1">
    <molecule id="Q86YW0-1"/>
    <property type="organism name" value="human"/>
</dbReference>
<dbReference type="AGR" id="HGNC:19218"/>
<dbReference type="CTD" id="89869"/>
<dbReference type="DisGeNET" id="89869"/>
<dbReference type="GeneCards" id="PLCZ1"/>
<dbReference type="HGNC" id="HGNC:19218">
    <property type="gene designation" value="PLCZ1"/>
</dbReference>
<dbReference type="HPA" id="ENSG00000139151">
    <property type="expression patterns" value="Tissue enriched (testis)"/>
</dbReference>
<dbReference type="MalaCards" id="PLCZ1"/>
<dbReference type="MIM" id="608075">
    <property type="type" value="gene"/>
</dbReference>
<dbReference type="MIM" id="617214">
    <property type="type" value="phenotype"/>
</dbReference>
<dbReference type="neXtProt" id="NX_Q86YW0"/>
<dbReference type="OpenTargets" id="ENSG00000139151"/>
<dbReference type="PharmGKB" id="PA134875646"/>
<dbReference type="VEuPathDB" id="HostDB:ENSG00000139151"/>
<dbReference type="eggNOG" id="KOG0169">
    <property type="taxonomic scope" value="Eukaryota"/>
</dbReference>
<dbReference type="GeneTree" id="ENSGT00940000159950"/>
<dbReference type="HOGENOM" id="CLU_002738_0_3_1"/>
<dbReference type="InParanoid" id="Q86YW0"/>
<dbReference type="OrthoDB" id="269822at2759"/>
<dbReference type="PAN-GO" id="Q86YW0">
    <property type="GO annotations" value="4 GO annotations based on evolutionary models"/>
</dbReference>
<dbReference type="PhylomeDB" id="Q86YW0"/>
<dbReference type="TreeFam" id="TF313216"/>
<dbReference type="PathwayCommons" id="Q86YW0"/>
<dbReference type="Reactome" id="R-HSA-1855204">
    <property type="pathway name" value="Synthesis of IP3 and IP4 in the cytosol"/>
</dbReference>
<dbReference type="SignaLink" id="Q86YW0"/>
<dbReference type="BioGRID-ORCS" id="89869">
    <property type="hits" value="11 hits in 1152 CRISPR screens"/>
</dbReference>
<dbReference type="ChiTaRS" id="PLCZ1">
    <property type="organism name" value="human"/>
</dbReference>
<dbReference type="GenomeRNAi" id="89869"/>
<dbReference type="Pharos" id="Q86YW0">
    <property type="development level" value="Tbio"/>
</dbReference>
<dbReference type="PRO" id="PR:Q86YW0"/>
<dbReference type="Proteomes" id="UP000005640">
    <property type="component" value="Chromosome 12"/>
</dbReference>
<dbReference type="RNAct" id="Q86YW0">
    <property type="molecule type" value="protein"/>
</dbReference>
<dbReference type="Bgee" id="ENSG00000139151">
    <property type="expression patterns" value="Expressed in sperm and 107 other cell types or tissues"/>
</dbReference>
<dbReference type="ExpressionAtlas" id="Q86YW0">
    <property type="expression patterns" value="baseline and differential"/>
</dbReference>
<dbReference type="GO" id="GO:0005829">
    <property type="term" value="C:cytosol"/>
    <property type="evidence" value="ECO:0000304"/>
    <property type="project" value="Reactome"/>
</dbReference>
<dbReference type="GO" id="GO:0005730">
    <property type="term" value="C:nucleolus"/>
    <property type="evidence" value="ECO:0007669"/>
    <property type="project" value="Ensembl"/>
</dbReference>
<dbReference type="GO" id="GO:0005654">
    <property type="term" value="C:nucleoplasm"/>
    <property type="evidence" value="ECO:0007669"/>
    <property type="project" value="Ensembl"/>
</dbReference>
<dbReference type="GO" id="GO:0005634">
    <property type="term" value="C:nucleus"/>
    <property type="evidence" value="ECO:0000314"/>
    <property type="project" value="UniProtKB"/>
</dbReference>
<dbReference type="GO" id="GO:0048471">
    <property type="term" value="C:perinuclear region of cytoplasm"/>
    <property type="evidence" value="ECO:0007669"/>
    <property type="project" value="UniProtKB-SubCell"/>
</dbReference>
<dbReference type="GO" id="GO:0045120">
    <property type="term" value="C:pronucleus"/>
    <property type="evidence" value="ECO:0007669"/>
    <property type="project" value="Ensembl"/>
</dbReference>
<dbReference type="GO" id="GO:0061827">
    <property type="term" value="C:sperm head"/>
    <property type="evidence" value="ECO:0000315"/>
    <property type="project" value="UniProtKB"/>
</dbReference>
<dbReference type="GO" id="GO:0005509">
    <property type="term" value="F:calcium ion binding"/>
    <property type="evidence" value="ECO:0007669"/>
    <property type="project" value="InterPro"/>
</dbReference>
<dbReference type="GO" id="GO:0032266">
    <property type="term" value="F:phosphatidylinositol-3-phosphate binding"/>
    <property type="evidence" value="ECO:0000315"/>
    <property type="project" value="UniProtKB"/>
</dbReference>
<dbReference type="GO" id="GO:0005546">
    <property type="term" value="F:phosphatidylinositol-4,5-bisphosphate binding"/>
    <property type="evidence" value="ECO:0000314"/>
    <property type="project" value="UniProtKB"/>
</dbReference>
<dbReference type="GO" id="GO:0004435">
    <property type="term" value="F:phosphatidylinositol-4,5-bisphosphate phospholipase C activity"/>
    <property type="evidence" value="ECO:0000314"/>
    <property type="project" value="UniProtKB"/>
</dbReference>
<dbReference type="GO" id="GO:0010314">
    <property type="term" value="F:phosphatidylinositol-5-phosphate binding"/>
    <property type="evidence" value="ECO:0000315"/>
    <property type="project" value="UniProtKB"/>
</dbReference>
<dbReference type="GO" id="GO:0006816">
    <property type="term" value="P:calcium ion transport"/>
    <property type="evidence" value="ECO:0007669"/>
    <property type="project" value="Ensembl"/>
</dbReference>
<dbReference type="GO" id="GO:0007343">
    <property type="term" value="P:egg activation"/>
    <property type="evidence" value="ECO:0000315"/>
    <property type="project" value="UniProtKB"/>
</dbReference>
<dbReference type="GO" id="GO:0035556">
    <property type="term" value="P:intracellular signal transduction"/>
    <property type="evidence" value="ECO:0007669"/>
    <property type="project" value="InterPro"/>
</dbReference>
<dbReference type="GO" id="GO:0016042">
    <property type="term" value="P:lipid catabolic process"/>
    <property type="evidence" value="ECO:0007669"/>
    <property type="project" value="UniProtKB-KW"/>
</dbReference>
<dbReference type="GO" id="GO:0007204">
    <property type="term" value="P:positive regulation of cytosolic calcium ion concentration"/>
    <property type="evidence" value="ECO:0000315"/>
    <property type="project" value="UniProtKB"/>
</dbReference>
<dbReference type="GO" id="GO:0060470">
    <property type="term" value="P:positive regulation of cytosolic calcium ion concentration involved in egg activation"/>
    <property type="evidence" value="ECO:0000314"/>
    <property type="project" value="UniProtKB"/>
</dbReference>
<dbReference type="CDD" id="cd00275">
    <property type="entry name" value="C2_PLC_like"/>
    <property type="match status" value="1"/>
</dbReference>
<dbReference type="CDD" id="cd16204">
    <property type="entry name" value="EFh_PI-PLCzeta"/>
    <property type="match status" value="1"/>
</dbReference>
<dbReference type="CDD" id="cd08595">
    <property type="entry name" value="PI-PLCc_zeta"/>
    <property type="match status" value="1"/>
</dbReference>
<dbReference type="FunFam" id="1.10.238.10:FF:000005">
    <property type="entry name" value="Phosphoinositide phospholipase C"/>
    <property type="match status" value="1"/>
</dbReference>
<dbReference type="FunFam" id="1.10.238.10:FF:000357">
    <property type="entry name" value="Phosphoinositide phospholipase C"/>
    <property type="match status" value="1"/>
</dbReference>
<dbReference type="FunFam" id="2.60.40.150:FF:000147">
    <property type="entry name" value="Phosphoinositide phospholipase C"/>
    <property type="match status" value="1"/>
</dbReference>
<dbReference type="FunFam" id="3.20.20.190:FF:000027">
    <property type="entry name" value="Phosphoinositide phospholipase C"/>
    <property type="match status" value="1"/>
</dbReference>
<dbReference type="Gene3D" id="2.60.40.150">
    <property type="entry name" value="C2 domain"/>
    <property type="match status" value="1"/>
</dbReference>
<dbReference type="Gene3D" id="1.10.238.10">
    <property type="entry name" value="EF-hand"/>
    <property type="match status" value="2"/>
</dbReference>
<dbReference type="Gene3D" id="3.20.20.190">
    <property type="entry name" value="Phosphatidylinositol (PI) phosphodiesterase"/>
    <property type="match status" value="1"/>
</dbReference>
<dbReference type="InterPro" id="IPR000008">
    <property type="entry name" value="C2_dom"/>
</dbReference>
<dbReference type="InterPro" id="IPR035892">
    <property type="entry name" value="C2_domain_sf"/>
</dbReference>
<dbReference type="InterPro" id="IPR011992">
    <property type="entry name" value="EF-hand-dom_pair"/>
</dbReference>
<dbReference type="InterPro" id="IPR002048">
    <property type="entry name" value="EF_hand_dom"/>
</dbReference>
<dbReference type="InterPro" id="IPR001192">
    <property type="entry name" value="PI-PLC_fam"/>
</dbReference>
<dbReference type="InterPro" id="IPR017946">
    <property type="entry name" value="PLC-like_Pdiesterase_TIM-brl"/>
</dbReference>
<dbReference type="InterPro" id="IPR015359">
    <property type="entry name" value="PLC_EF-hand-like"/>
</dbReference>
<dbReference type="InterPro" id="IPR000909">
    <property type="entry name" value="PLipase_C_PInositol-sp_X_dom"/>
</dbReference>
<dbReference type="InterPro" id="IPR001711">
    <property type="entry name" value="PLipase_C_Pinositol-sp_Y"/>
</dbReference>
<dbReference type="PANTHER" id="PTHR10336:SF29">
    <property type="entry name" value="1-PHOSPHATIDYLINOSITOL 4,5-BISPHOSPHATE PHOSPHODIESTERASE ZETA-1"/>
    <property type="match status" value="1"/>
</dbReference>
<dbReference type="PANTHER" id="PTHR10336">
    <property type="entry name" value="PHOSPHOINOSITIDE-SPECIFIC PHOSPHOLIPASE C FAMILY PROTEIN"/>
    <property type="match status" value="1"/>
</dbReference>
<dbReference type="Pfam" id="PF00168">
    <property type="entry name" value="C2"/>
    <property type="match status" value="1"/>
</dbReference>
<dbReference type="Pfam" id="PF09279">
    <property type="entry name" value="EF-hand_like"/>
    <property type="match status" value="1"/>
</dbReference>
<dbReference type="Pfam" id="PF00388">
    <property type="entry name" value="PI-PLC-X"/>
    <property type="match status" value="1"/>
</dbReference>
<dbReference type="Pfam" id="PF00387">
    <property type="entry name" value="PI-PLC-Y"/>
    <property type="match status" value="1"/>
</dbReference>
<dbReference type="PRINTS" id="PR00390">
    <property type="entry name" value="PHPHLIPASEC"/>
</dbReference>
<dbReference type="SMART" id="SM00239">
    <property type="entry name" value="C2"/>
    <property type="match status" value="1"/>
</dbReference>
<dbReference type="SMART" id="SM00148">
    <property type="entry name" value="PLCXc"/>
    <property type="match status" value="1"/>
</dbReference>
<dbReference type="SMART" id="SM00149">
    <property type="entry name" value="PLCYc"/>
    <property type="match status" value="1"/>
</dbReference>
<dbReference type="SUPFAM" id="SSF49562">
    <property type="entry name" value="C2 domain (Calcium/lipid-binding domain, CaLB)"/>
    <property type="match status" value="1"/>
</dbReference>
<dbReference type="SUPFAM" id="SSF47473">
    <property type="entry name" value="EF-hand"/>
    <property type="match status" value="1"/>
</dbReference>
<dbReference type="SUPFAM" id="SSF51695">
    <property type="entry name" value="PLC-like phosphodiesterases"/>
    <property type="match status" value="1"/>
</dbReference>
<dbReference type="PROSITE" id="PS50004">
    <property type="entry name" value="C2"/>
    <property type="match status" value="1"/>
</dbReference>
<dbReference type="PROSITE" id="PS50222">
    <property type="entry name" value="EF_HAND_2"/>
    <property type="match status" value="1"/>
</dbReference>
<dbReference type="PROSITE" id="PS50007">
    <property type="entry name" value="PIPLC_X_DOMAIN"/>
    <property type="match status" value="1"/>
</dbReference>
<dbReference type="PROSITE" id="PS50008">
    <property type="entry name" value="PIPLC_Y_DOMAIN"/>
    <property type="match status" value="1"/>
</dbReference>
<protein>
    <recommendedName>
        <fullName>1-phosphatidylinositol 4,5-bisphosphate phosphodiesterase zeta-1</fullName>
        <ecNumber>3.1.4.11</ecNumber>
    </recommendedName>
    <alternativeName>
        <fullName>Phosphoinositide phospholipase C-zeta-1</fullName>
    </alternativeName>
    <alternativeName>
        <fullName evidence="16">Phospholipase C-zeta-1</fullName>
        <shortName evidence="16">PLC-zeta-1</shortName>
    </alternativeName>
    <alternativeName>
        <fullName>Testis-development protein NYD-SP27</fullName>
    </alternativeName>
</protein>
<sequence>MEMRWFLSKIQDDFRGGKINLEKTQRLLEKLDIRCSYIHVKQIFKDNDRLKQGRITIEEFRAIYRIITHREEIIEIFNTYSENRKILLASNLAQFLTQEQYAAEMSKAIAFEIIQKYEPIEEVRKAHQMSLEGFTRYMDSRECLLFKNECRKVYQDMTHPLNDYFISSSHNTYLVSDQLLGPSDLWGYVSALVKGCRCLEIDCWDGAQNEPVVYHGYTLTSKLLFKTVIQAIHKYAFMTSDYPVVLSLENHCSTAQQEVMADNLQATFGESLLSDMLDDFPDTLPSPEALKFKILVKNKKIGTLKETHERKGSDKRGDNQDKETGVKKLPGVMLFKKKKTRKLKIALALSDLVIYTKAEKFKSFQHSRLYQQFNENNSIGETQARKLSKLRVHEFIFHTRKFITRIYPKATRADSSNFNPQEFWNIGCQMVALNFQTPGLPMDLQNGKFLDNGGSGYILKPHFLRESKSYFNPSNIKEGMPITLTIRLISGIQLPLTHSSSNKGDSLVIIEVFGVPNDQMKQQTRVIKKNAFSPRWNETFTFIIHVPELALIRFVVEGQGLIAGNEFLGQYTLPLLCMNKGYRRIPLFSRMGESLEPASLFVYVWYVR</sequence>
<evidence type="ECO:0000250" key="1">
    <source>
        <dbReference type="UniProtKB" id="P10688"/>
    </source>
</evidence>
<evidence type="ECO:0000250" key="2">
    <source>
        <dbReference type="UniProtKB" id="Q8K4D7"/>
    </source>
</evidence>
<evidence type="ECO:0000255" key="3">
    <source>
        <dbReference type="PROSITE-ProRule" id="PRU00041"/>
    </source>
</evidence>
<evidence type="ECO:0000255" key="4">
    <source>
        <dbReference type="PROSITE-ProRule" id="PRU00270"/>
    </source>
</evidence>
<evidence type="ECO:0000255" key="5">
    <source>
        <dbReference type="PROSITE-ProRule" id="PRU00271"/>
    </source>
</evidence>
<evidence type="ECO:0000255" key="6">
    <source>
        <dbReference type="PROSITE-ProRule" id="PRU00448"/>
    </source>
</evidence>
<evidence type="ECO:0000256" key="7">
    <source>
        <dbReference type="SAM" id="MobiDB-lite"/>
    </source>
</evidence>
<evidence type="ECO:0000269" key="8">
    <source>
    </source>
</evidence>
<evidence type="ECO:0000269" key="9">
    <source>
    </source>
</evidence>
<evidence type="ECO:0000269" key="10">
    <source>
    </source>
</evidence>
<evidence type="ECO:0000269" key="11">
    <source>
    </source>
</evidence>
<evidence type="ECO:0000269" key="12">
    <source>
    </source>
</evidence>
<evidence type="ECO:0000269" key="13">
    <source>
    </source>
</evidence>
<evidence type="ECO:0000269" key="14">
    <source>
    </source>
</evidence>
<evidence type="ECO:0000269" key="15">
    <source>
    </source>
</evidence>
<evidence type="ECO:0000303" key="16">
    <source>
    </source>
</evidence>
<evidence type="ECO:0000303" key="17">
    <source>
    </source>
</evidence>
<evidence type="ECO:0000303" key="18">
    <source>
    </source>
</evidence>
<evidence type="ECO:0000305" key="19"/>
<evidence type="ECO:0000312" key="20">
    <source>
        <dbReference type="EMBL" id="AAI25068.1"/>
    </source>
</evidence>
<evidence type="ECO:0000312" key="21">
    <source>
        <dbReference type="EMBL" id="AAK61372.1"/>
    </source>
</evidence>
<evidence type="ECO:0000312" key="22">
    <source>
        <dbReference type="EMBL" id="AAN71895.1"/>
    </source>
</evidence>
<evidence type="ECO:0000312" key="23">
    <source>
        <dbReference type="EMBL" id="BAF84968.1"/>
    </source>
</evidence>
<evidence type="ECO:0000312" key="24">
    <source>
        <dbReference type="HGNC" id="HGNC:19218"/>
    </source>
</evidence>
<name>PLCZ1_HUMAN</name>
<proteinExistence type="evidence at protein level"/>
<reference evidence="19 22" key="1">
    <citation type="journal article" date="2002" name="Reproduction">
        <title>Sperm phospholipase Czeta from humans and cynomolgus monkeys triggers Ca2+ oscillations, activation and development of mouse oocytes.</title>
        <authorList>
            <person name="Cox L.J."/>
            <person name="Larman M.G."/>
            <person name="Saunders C.M."/>
            <person name="Hashimoto K."/>
            <person name="Swann K."/>
            <person name="Lai F.A."/>
        </authorList>
    </citation>
    <scope>NUCLEOTIDE SEQUENCE [MRNA] (ISOFORM 1)</scope>
    <scope>FUNCTION</scope>
    <scope>TISSUE SPECIFICITY</scope>
    <source>
        <tissue evidence="22">Testis</tissue>
    </source>
</reference>
<reference evidence="19 21" key="2">
    <citation type="journal article" date="2003" name="Lancet">
        <title>Rescue of defective pancreatic secretion in cystic-fibrosis cells by suppression of a novel isoform of phospholipase C.</title>
        <authorList>
            <person name="Zhu H."/>
            <person name="Zhu J.X."/>
            <person name="Lo P.S."/>
            <person name="Li J."/>
            <person name="Leung K.M."/>
            <person name="Rowlands D.K."/>
            <person name="Tsang L.L."/>
            <person name="Yu M.K."/>
            <person name="Jiang J.L."/>
            <person name="Lam S.Y."/>
            <person name="Chung Y.W."/>
            <person name="Zhou Z."/>
            <person name="Sha J."/>
            <person name="Chang Chan H."/>
        </authorList>
    </citation>
    <scope>NUCLEOTIDE SEQUENCE [MRNA] (ISOFORM 3)</scope>
    <scope>FUNCTION</scope>
    <scope>TISSUE SPECIFICITY</scope>
    <source>
        <tissue evidence="21">Testis</tissue>
    </source>
</reference>
<reference evidence="19 23" key="3">
    <citation type="journal article" date="2004" name="Nat. Genet.">
        <title>Complete sequencing and characterization of 21,243 full-length human cDNAs.</title>
        <authorList>
            <person name="Ota T."/>
            <person name="Suzuki Y."/>
            <person name="Nishikawa T."/>
            <person name="Otsuki T."/>
            <person name="Sugiyama T."/>
            <person name="Irie R."/>
            <person name="Wakamatsu A."/>
            <person name="Hayashi K."/>
            <person name="Sato H."/>
            <person name="Nagai K."/>
            <person name="Kimura K."/>
            <person name="Makita H."/>
            <person name="Sekine M."/>
            <person name="Obayashi M."/>
            <person name="Nishi T."/>
            <person name="Shibahara T."/>
            <person name="Tanaka T."/>
            <person name="Ishii S."/>
            <person name="Yamamoto J."/>
            <person name="Saito K."/>
            <person name="Kawai Y."/>
            <person name="Isono Y."/>
            <person name="Nakamura Y."/>
            <person name="Nagahari K."/>
            <person name="Murakami K."/>
            <person name="Yasuda T."/>
            <person name="Iwayanagi T."/>
            <person name="Wagatsuma M."/>
            <person name="Shiratori A."/>
            <person name="Sudo H."/>
            <person name="Hosoiri T."/>
            <person name="Kaku Y."/>
            <person name="Kodaira H."/>
            <person name="Kondo H."/>
            <person name="Sugawara M."/>
            <person name="Takahashi M."/>
            <person name="Kanda K."/>
            <person name="Yokoi T."/>
            <person name="Furuya T."/>
            <person name="Kikkawa E."/>
            <person name="Omura Y."/>
            <person name="Abe K."/>
            <person name="Kamihara K."/>
            <person name="Katsuta N."/>
            <person name="Sato K."/>
            <person name="Tanikawa M."/>
            <person name="Yamazaki M."/>
            <person name="Ninomiya K."/>
            <person name="Ishibashi T."/>
            <person name="Yamashita H."/>
            <person name="Murakawa K."/>
            <person name="Fujimori K."/>
            <person name="Tanai H."/>
            <person name="Kimata M."/>
            <person name="Watanabe M."/>
            <person name="Hiraoka S."/>
            <person name="Chiba Y."/>
            <person name="Ishida S."/>
            <person name="Ono Y."/>
            <person name="Takiguchi S."/>
            <person name="Watanabe S."/>
            <person name="Yosida M."/>
            <person name="Hotuta T."/>
            <person name="Kusano J."/>
            <person name="Kanehori K."/>
            <person name="Takahashi-Fujii A."/>
            <person name="Hara H."/>
            <person name="Tanase T.-O."/>
            <person name="Nomura Y."/>
            <person name="Togiya S."/>
            <person name="Komai F."/>
            <person name="Hara R."/>
            <person name="Takeuchi K."/>
            <person name="Arita M."/>
            <person name="Imose N."/>
            <person name="Musashino K."/>
            <person name="Yuuki H."/>
            <person name="Oshima A."/>
            <person name="Sasaki N."/>
            <person name="Aotsuka S."/>
            <person name="Yoshikawa Y."/>
            <person name="Matsunawa H."/>
            <person name="Ichihara T."/>
            <person name="Shiohata N."/>
            <person name="Sano S."/>
            <person name="Moriya S."/>
            <person name="Momiyama H."/>
            <person name="Satoh N."/>
            <person name="Takami S."/>
            <person name="Terashima Y."/>
            <person name="Suzuki O."/>
            <person name="Nakagawa S."/>
            <person name="Senoh A."/>
            <person name="Mizoguchi H."/>
            <person name="Goto Y."/>
            <person name="Shimizu F."/>
            <person name="Wakebe H."/>
            <person name="Hishigaki H."/>
            <person name="Watanabe T."/>
            <person name="Sugiyama A."/>
            <person name="Takemoto M."/>
            <person name="Kawakami B."/>
            <person name="Yamazaki M."/>
            <person name="Watanabe K."/>
            <person name="Kumagai A."/>
            <person name="Itakura S."/>
            <person name="Fukuzumi Y."/>
            <person name="Fujimori Y."/>
            <person name="Komiyama M."/>
            <person name="Tashiro H."/>
            <person name="Tanigami A."/>
            <person name="Fujiwara T."/>
            <person name="Ono T."/>
            <person name="Yamada K."/>
            <person name="Fujii Y."/>
            <person name="Ozaki K."/>
            <person name="Hirao M."/>
            <person name="Ohmori Y."/>
            <person name="Kawabata A."/>
            <person name="Hikiji T."/>
            <person name="Kobatake N."/>
            <person name="Inagaki H."/>
            <person name="Ikema Y."/>
            <person name="Okamoto S."/>
            <person name="Okitani R."/>
            <person name="Kawakami T."/>
            <person name="Noguchi S."/>
            <person name="Itoh T."/>
            <person name="Shigeta K."/>
            <person name="Senba T."/>
            <person name="Matsumura K."/>
            <person name="Nakajima Y."/>
            <person name="Mizuno T."/>
            <person name="Morinaga M."/>
            <person name="Sasaki M."/>
            <person name="Togashi T."/>
            <person name="Oyama M."/>
            <person name="Hata H."/>
            <person name="Watanabe M."/>
            <person name="Komatsu T."/>
            <person name="Mizushima-Sugano J."/>
            <person name="Satoh T."/>
            <person name="Shirai Y."/>
            <person name="Takahashi Y."/>
            <person name="Nakagawa K."/>
            <person name="Okumura K."/>
            <person name="Nagase T."/>
            <person name="Nomura N."/>
            <person name="Kikuchi H."/>
            <person name="Masuho Y."/>
            <person name="Yamashita R."/>
            <person name="Nakai K."/>
            <person name="Yada T."/>
            <person name="Nakamura Y."/>
            <person name="Ohara O."/>
            <person name="Isogai T."/>
            <person name="Sugano S."/>
        </authorList>
    </citation>
    <scope>NUCLEOTIDE SEQUENCE [LARGE SCALE MRNA] (ISOFORM 1)</scope>
    <source>
        <tissue evidence="23">Testis</tissue>
    </source>
</reference>
<reference evidence="19 20" key="4">
    <citation type="journal article" date="2004" name="Genome Res.">
        <title>The status, quality, and expansion of the NIH full-length cDNA project: the Mammalian Gene Collection (MGC).</title>
        <authorList>
            <consortium name="The MGC Project Team"/>
        </authorList>
    </citation>
    <scope>NUCLEOTIDE SEQUENCE [LARGE SCALE MRNA] (ISOFORM 2)</scope>
</reference>
<reference evidence="19" key="5">
    <citation type="journal article" date="2004" name="Reproduction">
        <title>Phospholipase Czeta causes Ca2+ oscillations and parthenogenetic activation of human oocytes.</title>
        <authorList>
            <person name="Rogers N.T."/>
            <person name="Hobson E."/>
            <person name="Pickering S."/>
            <person name="Lai F.A."/>
            <person name="Braude P."/>
            <person name="Swann K."/>
        </authorList>
    </citation>
    <scope>FUNCTION</scope>
</reference>
<reference key="6">
    <citation type="journal article" date="2016" name="Hum. Mol. Genet.">
        <title>Homozygous mutation of PLCZ1 leads to defective human oocyte activation and infertility that is not rescued by the WW-binding protein PAWP.</title>
        <authorList>
            <person name="Escoffier J."/>
            <person name="Lee H.C."/>
            <person name="Yassine S."/>
            <person name="Zouari R."/>
            <person name="Martinez G."/>
            <person name="Karaouzene T."/>
            <person name="Coutton C."/>
            <person name="Kherraf Z.E."/>
            <person name="Halouani L."/>
            <person name="Triki C."/>
            <person name="Nef S."/>
            <person name="Thierry-Mieg N."/>
            <person name="Savinov S.N."/>
            <person name="Fissore R."/>
            <person name="Ray P.F."/>
            <person name="Arnoult C."/>
        </authorList>
    </citation>
    <scope>FUNCTION</scope>
    <scope>TISSUE SPECIFICITY</scope>
    <scope>INVOLVEMENT IN SPGF17</scope>
    <scope>VARIANT SPGF17 PHE-489</scope>
    <scope>CHARACTERIZATION OF VARIANT SPGF17 PHE-489</scope>
</reference>
<reference key="7">
    <citation type="journal article" date="2023" name="Clin. Genet.">
        <title>Novel variants in ACTL7A and PLCZ1 are associated with male infertility and total fertilization failure.</title>
        <authorList>
            <person name="Zhao S."/>
            <person name="Cui Y."/>
            <person name="Guo S."/>
            <person name="Liu B."/>
            <person name="Bian Y."/>
            <person name="Zhao S."/>
            <person name="Chen Z."/>
            <person name="Zhao H."/>
        </authorList>
    </citation>
    <scope>VARIANTS SPGF17 SER-425 AND ASP-453</scope>
</reference>
<reference key="8">
    <citation type="journal article" date="2023" name="Hum. Reprod.">
        <title>ACROSIN deficiency causes total fertilization failure in humans by preventing the sperm from penetrating the zona pellucida.</title>
        <authorList>
            <person name="Hua R."/>
            <person name="Xue R."/>
            <person name="Liu Y."/>
            <person name="Li Y."/>
            <person name="Sha X."/>
            <person name="Li K."/>
            <person name="Gao Y."/>
            <person name="Shen Q."/>
            <person name="Lv M."/>
            <person name="Xu Y."/>
            <person name="Zhang Z."/>
            <person name="He X."/>
            <person name="Cao Y."/>
            <person name="Wu H."/>
        </authorList>
    </citation>
    <scope>VARIANT SPGF17 196-CYS--ARG-608 DEL</scope>
</reference>
<gene>
    <name evidence="24" type="primary">PLCZ1</name>
</gene>
<comment type="function">
    <text evidence="2 8 9 12 13 19">The production of the second messenger molecules diacylglycerol (DAG) and inositol 1,4,5-trisphosphate (IP3) is mediated by activated phosphatidylinositol-specific phospholipase C enzymes. In vitro, hydrolyzes PtdIns(4,5)P2 in a Ca(2+)-dependent manner. Triggers intracellular Ca(2+) oscillations in oocytes solely during M phase and is involved in inducing oocyte activation and initiating embryonic development up to the blastocyst stage. Is therefore a strong candidate for the egg-activating soluble sperm factor that is transferred from the sperm into the egg cytoplasm following gamete membrane fusion. May exert an inhibitory effect on phospholipase-C-coupled processes that depend on calcium ions and protein kinase C, including CFTR trafficking and function.</text>
</comment>
<comment type="catalytic activity">
    <reaction evidence="2">
        <text>a 1,2-diacyl-sn-glycero-3-phospho-(1D-myo-inositol-4,5-bisphosphate) + H2O = 1D-myo-inositol 1,4,5-trisphosphate + a 1,2-diacyl-sn-glycerol + H(+)</text>
        <dbReference type="Rhea" id="RHEA:33179"/>
        <dbReference type="ChEBI" id="CHEBI:15377"/>
        <dbReference type="ChEBI" id="CHEBI:15378"/>
        <dbReference type="ChEBI" id="CHEBI:17815"/>
        <dbReference type="ChEBI" id="CHEBI:58456"/>
        <dbReference type="ChEBI" id="CHEBI:203600"/>
        <dbReference type="EC" id="3.1.4.11"/>
    </reaction>
    <physiologicalReaction direction="left-to-right" evidence="2">
        <dbReference type="Rhea" id="RHEA:33180"/>
    </physiologicalReaction>
</comment>
<comment type="cofactor">
    <cofactor evidence="2">
        <name>Ca(2+)</name>
        <dbReference type="ChEBI" id="CHEBI:29108"/>
    </cofactor>
</comment>
<comment type="subunit">
    <text evidence="2">Interacts via its C2 domain with PtdIns(3)P and, to a lesser extent, PtdIns(5)P in vitro.</text>
</comment>
<comment type="subcellular location">
    <subcellularLocation>
        <location evidence="2">Nucleus</location>
    </subcellularLocation>
    <subcellularLocation>
        <location evidence="2">Cytoplasm</location>
        <location evidence="2">Perinuclear region</location>
    </subcellularLocation>
    <text evidence="2">Exhibits alternative cytoplasmic/nuclear localization during development. Translocates from the pronucleus into cytoplasm upon nuclear envelope breakdown for mitosis and localizes again to the pronucleus at interphase following meiosis and mitosis (By similarity).</text>
</comment>
<comment type="alternative products">
    <event type="alternative splicing"/>
    <isoform>
        <id>Q86YW0-1</id>
        <name evidence="8 9 10">1</name>
        <sequence type="displayed"/>
    </isoform>
    <isoform>
        <id>Q86YW0-2</id>
        <name evidence="11">2</name>
        <sequence type="described" ref="VSP_052862"/>
    </isoform>
    <isoform>
        <id>Q86YW0-3</id>
        <name>3</name>
        <sequence type="described" ref="VSP_035076"/>
    </isoform>
</comment>
<comment type="tissue specificity">
    <text evidence="8 9 13">Expressed specifically in testis and sperm. Weakly expressed in pancreatic-duct cells. Up-regulated in pancreatic-duct cells from patients with cystic fibrosis.</text>
</comment>
<comment type="domain">
    <text evidence="2">The EF-hand and C2 domains are essential for triggering Ca(2+) oscillating activity and the regulation of PLCZ1 enzyme activity.</text>
</comment>
<comment type="domain">
    <text evidence="2">The X-Y linker region between PI-PLC X-box and Y-box domains may be a target for proteolysis and may play an important regulatory role during fertilization.</text>
</comment>
<comment type="disease" evidence="13 14 15">
    <disease id="DI-04868">
        <name>Spermatogenic failure 17</name>
        <acronym>SPGF17</acronym>
        <description>An autosomal recessive infertility disorder due to failure of oocyte activation and fertilization by sperm that otherwise exhibits normal morphology.</description>
        <dbReference type="MIM" id="617214"/>
    </disease>
    <text>The disease is caused by variants affecting the gene represented in this entry.</text>
</comment>
<organism>
    <name type="scientific">Homo sapiens</name>
    <name type="common">Human</name>
    <dbReference type="NCBI Taxonomy" id="9606"/>
    <lineage>
        <taxon>Eukaryota</taxon>
        <taxon>Metazoa</taxon>
        <taxon>Chordata</taxon>
        <taxon>Craniata</taxon>
        <taxon>Vertebrata</taxon>
        <taxon>Euteleostomi</taxon>
        <taxon>Mammalia</taxon>
        <taxon>Eutheria</taxon>
        <taxon>Euarchontoglires</taxon>
        <taxon>Primates</taxon>
        <taxon>Haplorrhini</taxon>
        <taxon>Catarrhini</taxon>
        <taxon>Hominidae</taxon>
        <taxon>Homo</taxon>
    </lineage>
</organism>